<sequence length="177" mass="19198">MTSRDCTGLSEFLGHGSDSCDSGSGSLGSLSYVQCVNLLSDLKSLGYQSIDSILYILGGGEAERFEIYRIFRRHGIGIGEALQLGVKKSLCNSPRSLLAILDDLLSRLGRGSAFLPSDLGAVKGELVATFHSSRLSVDLYVNNKKVVTRSVQAEGDYSYVARRFSGYKGLILRATRY</sequence>
<keyword id="KW-1185">Reference proteome</keyword>
<accession>Q67705</accession>
<reference key="1">
    <citation type="submission" date="2006-02" db="EMBL/GenBank/DDBJ databases">
        <authorList>
            <person name="Minafra A."/>
        </authorList>
    </citation>
    <scope>NUCLEOTIDE SEQUENCE [GENOMIC RNA]</scope>
</reference>
<gene>
    <name type="primary">ORF2</name>
</gene>
<organism>
    <name type="scientific">Grapevine virus A (isolate Is 151)</name>
    <name type="common">GVA</name>
    <dbReference type="NCBI Taxonomy" id="651358"/>
    <lineage>
        <taxon>Viruses</taxon>
        <taxon>Riboviria</taxon>
        <taxon>Orthornavirae</taxon>
        <taxon>Kitrinoviricota</taxon>
        <taxon>Alsuviricetes</taxon>
        <taxon>Tymovirales</taxon>
        <taxon>Betaflexiviridae</taxon>
        <taxon>Trivirinae</taxon>
        <taxon>Vitivirus</taxon>
        <taxon>Grapevine virus A</taxon>
    </lineage>
</organism>
<feature type="chain" id="PRO_0000401096" description="Uncharacterized ORF2 protein">
    <location>
        <begin position="1"/>
        <end position="177"/>
    </location>
</feature>
<proteinExistence type="predicted"/>
<protein>
    <recommendedName>
        <fullName>Uncharacterized ORF2 protein</fullName>
    </recommendedName>
</protein>
<name>ORF2_GVAIS</name>
<dbReference type="EMBL" id="X75433">
    <property type="protein sequence ID" value="CAA53183.1"/>
    <property type="molecule type" value="Genomic_RNA"/>
</dbReference>
<dbReference type="PIR" id="S77911">
    <property type="entry name" value="S77911"/>
</dbReference>
<dbReference type="RefSeq" id="NP_619663.1">
    <property type="nucleotide sequence ID" value="NC_003604.2"/>
</dbReference>
<dbReference type="GeneID" id="940189"/>
<dbReference type="KEGG" id="vg:940189"/>
<dbReference type="Proteomes" id="UP000000679">
    <property type="component" value="Segment"/>
</dbReference>
<organismHost>
    <name type="scientific">Vitis vinifera</name>
    <name type="common">Grape</name>
    <dbReference type="NCBI Taxonomy" id="29760"/>
</organismHost>